<proteinExistence type="inferred from homology"/>
<keyword id="KW-0067">ATP-binding</keyword>
<keyword id="KW-0997">Cell inner membrane</keyword>
<keyword id="KW-1003">Cell membrane</keyword>
<keyword id="KW-0963">Cytoplasm</keyword>
<keyword id="KW-0472">Membrane</keyword>
<keyword id="KW-0479">Metal-binding</keyword>
<keyword id="KW-0547">Nucleotide-binding</keyword>
<keyword id="KW-0653">Protein transport</keyword>
<keyword id="KW-1278">Translocase</keyword>
<keyword id="KW-0811">Translocation</keyword>
<keyword id="KW-0813">Transport</keyword>
<keyword id="KW-0862">Zinc</keyword>
<gene>
    <name evidence="1" type="primary">secA</name>
    <name type="ordered locus">BH01990</name>
</gene>
<organism>
    <name type="scientific">Bartonella henselae (strain ATCC 49882 / DSM 28221 / CCUG 30454 / Houston 1)</name>
    <name type="common">Rochalimaea henselae</name>
    <dbReference type="NCBI Taxonomy" id="283166"/>
    <lineage>
        <taxon>Bacteria</taxon>
        <taxon>Pseudomonadati</taxon>
        <taxon>Pseudomonadota</taxon>
        <taxon>Alphaproteobacteria</taxon>
        <taxon>Hyphomicrobiales</taxon>
        <taxon>Bartonellaceae</taxon>
        <taxon>Bartonella</taxon>
    </lineage>
</organism>
<evidence type="ECO:0000255" key="1">
    <source>
        <dbReference type="HAMAP-Rule" id="MF_01382"/>
    </source>
</evidence>
<evidence type="ECO:0000256" key="2">
    <source>
        <dbReference type="SAM" id="MobiDB-lite"/>
    </source>
</evidence>
<feature type="chain" id="PRO_0000320736" description="Protein translocase subunit SecA">
    <location>
        <begin position="1"/>
        <end position="905"/>
    </location>
</feature>
<feature type="region of interest" description="Disordered" evidence="2">
    <location>
        <begin position="837"/>
        <end position="885"/>
    </location>
</feature>
<feature type="compositionally biased region" description="Polar residues" evidence="2">
    <location>
        <begin position="852"/>
        <end position="865"/>
    </location>
</feature>
<feature type="binding site" evidence="1">
    <location>
        <position position="89"/>
    </location>
    <ligand>
        <name>ATP</name>
        <dbReference type="ChEBI" id="CHEBI:30616"/>
    </ligand>
</feature>
<feature type="binding site" evidence="1">
    <location>
        <begin position="107"/>
        <end position="111"/>
    </location>
    <ligand>
        <name>ATP</name>
        <dbReference type="ChEBI" id="CHEBI:30616"/>
    </ligand>
</feature>
<feature type="binding site" evidence="1">
    <location>
        <position position="502"/>
    </location>
    <ligand>
        <name>ATP</name>
        <dbReference type="ChEBI" id="CHEBI:30616"/>
    </ligand>
</feature>
<feature type="binding site" evidence="1">
    <location>
        <position position="889"/>
    </location>
    <ligand>
        <name>Zn(2+)</name>
        <dbReference type="ChEBI" id="CHEBI:29105"/>
    </ligand>
</feature>
<feature type="binding site" evidence="1">
    <location>
        <position position="891"/>
    </location>
    <ligand>
        <name>Zn(2+)</name>
        <dbReference type="ChEBI" id="CHEBI:29105"/>
    </ligand>
</feature>
<feature type="binding site" evidence="1">
    <location>
        <position position="900"/>
    </location>
    <ligand>
        <name>Zn(2+)</name>
        <dbReference type="ChEBI" id="CHEBI:29105"/>
    </ligand>
</feature>
<feature type="binding site" evidence="1">
    <location>
        <position position="901"/>
    </location>
    <ligand>
        <name>Zn(2+)</name>
        <dbReference type="ChEBI" id="CHEBI:29105"/>
    </ligand>
</feature>
<protein>
    <recommendedName>
        <fullName evidence="1">Protein translocase subunit SecA</fullName>
        <ecNumber evidence="1">7.4.2.8</ecNumber>
    </recommendedName>
</protein>
<reference key="1">
    <citation type="journal article" date="2004" name="Proc. Natl. Acad. Sci. U.S.A.">
        <title>The louse-borne human pathogen Bartonella quintana is a genomic derivative of the zoonotic agent Bartonella henselae.</title>
        <authorList>
            <person name="Alsmark U.C.M."/>
            <person name="Frank A.C."/>
            <person name="Karlberg E.O."/>
            <person name="Legault B.-A."/>
            <person name="Ardell D.H."/>
            <person name="Canbaeck B."/>
            <person name="Eriksson A.-S."/>
            <person name="Naeslund A.K."/>
            <person name="Handley S.A."/>
            <person name="Huvet M."/>
            <person name="La Scola B."/>
            <person name="Holmberg M."/>
            <person name="Andersson S.G.E."/>
        </authorList>
    </citation>
    <scope>NUCLEOTIDE SEQUENCE [LARGE SCALE GENOMIC DNA]</scope>
    <source>
        <strain>ATCC 49882 / DSM 28221 / CCUG 30454 / Houston 1</strain>
    </source>
</reference>
<name>SECA_BARHE</name>
<sequence length="905" mass="104140">MVGLGVFARKFFGSAHERRLKVLRKKAEQINVLEEQFQKLSDTQLCKKTDEFRKRLVEGETVDLLLPEAFATVREAAKRVYDMRPFDVQLIGGMVLHDCGIAEMRTGEGKTLMATLPIYLNALEGKGVHVVTVNDYLANRDAETMGKIFGFLGLTTGVILHDLDSDARRAAYACDITYATNNELGFDYLRDNMAFDRSQMVQRGHHYAIVDEVDSILIDEARTPLIISGPLEDRTDFYNLIDTFIPALTPEDYEIDEKQKTTTFTEVGTEKIEKMLEQAGHLKGESLYDIENVAIVHHINNALKAHKLFVRDKDYIVRNGEIVIIDEFTGRMMPGRRYSEGLHQALEAKEHVAIQPENQTLASITFQNYFRMYRKLSGMTGTAITEAEEFSNIYGLDVIEVPTNLPIQRRDEDDEIYRTAEEKYRAIVRDIRQAHEKRQPILVGTTSIEKSEQLAERLRKEGITNFRVLNARYHEQEAYIIAQAGVPGAVTIATNMAGRGTDIQLGGNIEMRIRQELQDMPEGLERTAKIEEIKKDVKQLKEKALAAGGLYVIATERHESRRIDNQLRGRSGRQGDPGRSKFFLSLQDDLMRIFGSNRMDGMLQKLGLKENEAIIHPWINKAIEKAQKKVEARNFEIRKNLLKYDDVMNDQRKVIFEQRMEIMNAEDLTEMILEMRNEVVEDLVETYIPSGTYCEKWDITALQEELHQLFNLELPIETWAKEDGIAEEQILERISNAVTKLENERIERFSPEVMAYFHKAVLLETIDTLWREHLVHLDHLRSVVGFRGYAQRDPLNEYKTESFELFQAMLRNLRRIVTSKLMRFEIIQQPIEPRIPEQTDVGDPILNDQNKKNSSTLWTPSQENKFVNPKDRNPSDSTTWGKVGRNERCPCGSEKKYKHCHGAFV</sequence>
<dbReference type="EC" id="7.4.2.8" evidence="1"/>
<dbReference type="EMBL" id="BX897699">
    <property type="protein sequence ID" value="CAF27011.1"/>
    <property type="molecule type" value="Genomic_DNA"/>
</dbReference>
<dbReference type="RefSeq" id="WP_011180150.1">
    <property type="nucleotide sequence ID" value="NZ_LRIJ02000001.1"/>
</dbReference>
<dbReference type="SMR" id="Q6G5U2"/>
<dbReference type="PaxDb" id="283166-BH01990"/>
<dbReference type="EnsemblBacteria" id="CAF27011">
    <property type="protein sequence ID" value="CAF27011"/>
    <property type="gene ID" value="BH01990"/>
</dbReference>
<dbReference type="GeneID" id="92984866"/>
<dbReference type="KEGG" id="bhe:BH01990"/>
<dbReference type="eggNOG" id="COG0653">
    <property type="taxonomic scope" value="Bacteria"/>
</dbReference>
<dbReference type="OrthoDB" id="9805579at2"/>
<dbReference type="Proteomes" id="UP000000421">
    <property type="component" value="Chromosome"/>
</dbReference>
<dbReference type="GO" id="GO:0031522">
    <property type="term" value="C:cell envelope Sec protein transport complex"/>
    <property type="evidence" value="ECO:0007669"/>
    <property type="project" value="TreeGrafter"/>
</dbReference>
<dbReference type="GO" id="GO:0005829">
    <property type="term" value="C:cytosol"/>
    <property type="evidence" value="ECO:0007669"/>
    <property type="project" value="TreeGrafter"/>
</dbReference>
<dbReference type="GO" id="GO:0005886">
    <property type="term" value="C:plasma membrane"/>
    <property type="evidence" value="ECO:0007669"/>
    <property type="project" value="UniProtKB-SubCell"/>
</dbReference>
<dbReference type="GO" id="GO:0005524">
    <property type="term" value="F:ATP binding"/>
    <property type="evidence" value="ECO:0007669"/>
    <property type="project" value="UniProtKB-UniRule"/>
</dbReference>
<dbReference type="GO" id="GO:0046872">
    <property type="term" value="F:metal ion binding"/>
    <property type="evidence" value="ECO:0007669"/>
    <property type="project" value="UniProtKB-KW"/>
</dbReference>
<dbReference type="GO" id="GO:0008564">
    <property type="term" value="F:protein-exporting ATPase activity"/>
    <property type="evidence" value="ECO:0007669"/>
    <property type="project" value="UniProtKB-EC"/>
</dbReference>
<dbReference type="GO" id="GO:0065002">
    <property type="term" value="P:intracellular protein transmembrane transport"/>
    <property type="evidence" value="ECO:0007669"/>
    <property type="project" value="UniProtKB-UniRule"/>
</dbReference>
<dbReference type="GO" id="GO:0017038">
    <property type="term" value="P:protein import"/>
    <property type="evidence" value="ECO:0007669"/>
    <property type="project" value="InterPro"/>
</dbReference>
<dbReference type="GO" id="GO:0006605">
    <property type="term" value="P:protein targeting"/>
    <property type="evidence" value="ECO:0007669"/>
    <property type="project" value="UniProtKB-UniRule"/>
</dbReference>
<dbReference type="GO" id="GO:0043952">
    <property type="term" value="P:protein transport by the Sec complex"/>
    <property type="evidence" value="ECO:0007669"/>
    <property type="project" value="TreeGrafter"/>
</dbReference>
<dbReference type="CDD" id="cd17928">
    <property type="entry name" value="DEXDc_SecA"/>
    <property type="match status" value="1"/>
</dbReference>
<dbReference type="CDD" id="cd18803">
    <property type="entry name" value="SF2_C_secA"/>
    <property type="match status" value="1"/>
</dbReference>
<dbReference type="FunFam" id="3.90.1440.10:FF:000001">
    <property type="entry name" value="Preprotein translocase subunit SecA"/>
    <property type="match status" value="1"/>
</dbReference>
<dbReference type="FunFam" id="1.10.3060.10:FF:000003">
    <property type="entry name" value="Protein translocase subunit SecA"/>
    <property type="match status" value="1"/>
</dbReference>
<dbReference type="FunFam" id="3.40.50.300:FF:000334">
    <property type="entry name" value="Protein translocase subunit SecA"/>
    <property type="match status" value="1"/>
</dbReference>
<dbReference type="FunFam" id="3.40.50.300:FF:001790">
    <property type="entry name" value="Protein translocase subunit SecA"/>
    <property type="match status" value="1"/>
</dbReference>
<dbReference type="Gene3D" id="3.10.450.50">
    <property type="match status" value="1"/>
</dbReference>
<dbReference type="Gene3D" id="1.10.3060.10">
    <property type="entry name" value="Helical scaffold and wing domains of SecA"/>
    <property type="match status" value="1"/>
</dbReference>
<dbReference type="Gene3D" id="3.40.50.300">
    <property type="entry name" value="P-loop containing nucleotide triphosphate hydrolases"/>
    <property type="match status" value="2"/>
</dbReference>
<dbReference type="Gene3D" id="3.90.1440.10">
    <property type="entry name" value="SecA, preprotein cross-linking domain"/>
    <property type="match status" value="1"/>
</dbReference>
<dbReference type="HAMAP" id="MF_01382">
    <property type="entry name" value="SecA"/>
    <property type="match status" value="1"/>
</dbReference>
<dbReference type="InterPro" id="IPR014001">
    <property type="entry name" value="Helicase_ATP-bd"/>
</dbReference>
<dbReference type="InterPro" id="IPR001650">
    <property type="entry name" value="Helicase_C-like"/>
</dbReference>
<dbReference type="InterPro" id="IPR027417">
    <property type="entry name" value="P-loop_NTPase"/>
</dbReference>
<dbReference type="InterPro" id="IPR004027">
    <property type="entry name" value="SEC_C_motif"/>
</dbReference>
<dbReference type="InterPro" id="IPR000185">
    <property type="entry name" value="SecA"/>
</dbReference>
<dbReference type="InterPro" id="IPR020937">
    <property type="entry name" value="SecA_CS"/>
</dbReference>
<dbReference type="InterPro" id="IPR011115">
    <property type="entry name" value="SecA_DEAD"/>
</dbReference>
<dbReference type="InterPro" id="IPR014018">
    <property type="entry name" value="SecA_motor_DEAD"/>
</dbReference>
<dbReference type="InterPro" id="IPR011130">
    <property type="entry name" value="SecA_preprotein_X-link_dom"/>
</dbReference>
<dbReference type="InterPro" id="IPR044722">
    <property type="entry name" value="SecA_SF2_C"/>
</dbReference>
<dbReference type="InterPro" id="IPR011116">
    <property type="entry name" value="SecA_Wing/Scaffold"/>
</dbReference>
<dbReference type="InterPro" id="IPR036266">
    <property type="entry name" value="SecA_Wing/Scaffold_sf"/>
</dbReference>
<dbReference type="InterPro" id="IPR036670">
    <property type="entry name" value="SecA_X-link_sf"/>
</dbReference>
<dbReference type="NCBIfam" id="NF009538">
    <property type="entry name" value="PRK12904.1"/>
    <property type="match status" value="1"/>
</dbReference>
<dbReference type="NCBIfam" id="TIGR00963">
    <property type="entry name" value="secA"/>
    <property type="match status" value="1"/>
</dbReference>
<dbReference type="PANTHER" id="PTHR30612:SF0">
    <property type="entry name" value="CHLOROPLAST PROTEIN-TRANSPORTING ATPASE"/>
    <property type="match status" value="1"/>
</dbReference>
<dbReference type="PANTHER" id="PTHR30612">
    <property type="entry name" value="SECA INNER MEMBRANE COMPONENT OF SEC PROTEIN SECRETION SYSTEM"/>
    <property type="match status" value="1"/>
</dbReference>
<dbReference type="Pfam" id="PF21090">
    <property type="entry name" value="P-loop_SecA"/>
    <property type="match status" value="1"/>
</dbReference>
<dbReference type="Pfam" id="PF02810">
    <property type="entry name" value="SEC-C"/>
    <property type="match status" value="1"/>
</dbReference>
<dbReference type="Pfam" id="PF07517">
    <property type="entry name" value="SecA_DEAD"/>
    <property type="match status" value="1"/>
</dbReference>
<dbReference type="Pfam" id="PF01043">
    <property type="entry name" value="SecA_PP_bind"/>
    <property type="match status" value="1"/>
</dbReference>
<dbReference type="Pfam" id="PF07516">
    <property type="entry name" value="SecA_SW"/>
    <property type="match status" value="1"/>
</dbReference>
<dbReference type="PRINTS" id="PR00906">
    <property type="entry name" value="SECA"/>
</dbReference>
<dbReference type="SMART" id="SM00957">
    <property type="entry name" value="SecA_DEAD"/>
    <property type="match status" value="1"/>
</dbReference>
<dbReference type="SMART" id="SM00958">
    <property type="entry name" value="SecA_PP_bind"/>
    <property type="match status" value="1"/>
</dbReference>
<dbReference type="SUPFAM" id="SSF81886">
    <property type="entry name" value="Helical scaffold and wing domains of SecA"/>
    <property type="match status" value="1"/>
</dbReference>
<dbReference type="SUPFAM" id="SSF52540">
    <property type="entry name" value="P-loop containing nucleoside triphosphate hydrolases"/>
    <property type="match status" value="2"/>
</dbReference>
<dbReference type="SUPFAM" id="SSF81767">
    <property type="entry name" value="Pre-protein crosslinking domain of SecA"/>
    <property type="match status" value="1"/>
</dbReference>
<dbReference type="PROSITE" id="PS01312">
    <property type="entry name" value="SECA"/>
    <property type="match status" value="1"/>
</dbReference>
<dbReference type="PROSITE" id="PS51196">
    <property type="entry name" value="SECA_MOTOR_DEAD"/>
    <property type="match status" value="1"/>
</dbReference>
<accession>Q6G5U2</accession>
<comment type="function">
    <text evidence="1">Part of the Sec protein translocase complex. Interacts with the SecYEG preprotein conducting channel. Has a central role in coupling the hydrolysis of ATP to the transfer of proteins into and across the cell membrane, serving both as a receptor for the preprotein-SecB complex and as an ATP-driven molecular motor driving the stepwise translocation of polypeptide chains across the membrane.</text>
</comment>
<comment type="catalytic activity">
    <reaction evidence="1">
        <text>ATP + H2O + cellular proteinSide 1 = ADP + phosphate + cellular proteinSide 2.</text>
        <dbReference type="EC" id="7.4.2.8"/>
    </reaction>
</comment>
<comment type="cofactor">
    <cofactor evidence="1">
        <name>Zn(2+)</name>
        <dbReference type="ChEBI" id="CHEBI:29105"/>
    </cofactor>
    <text evidence="1">May bind 1 zinc ion per subunit.</text>
</comment>
<comment type="subunit">
    <text evidence="1">Monomer and homodimer. Part of the essential Sec protein translocation apparatus which comprises SecA, SecYEG and auxiliary proteins SecDF-YajC and YidC.</text>
</comment>
<comment type="subcellular location">
    <subcellularLocation>
        <location evidence="1">Cell inner membrane</location>
        <topology evidence="1">Peripheral membrane protein</topology>
        <orientation evidence="1">Cytoplasmic side</orientation>
    </subcellularLocation>
    <subcellularLocation>
        <location evidence="1">Cytoplasm</location>
    </subcellularLocation>
    <text evidence="1">Distribution is 50-50.</text>
</comment>
<comment type="similarity">
    <text evidence="1">Belongs to the SecA family.</text>
</comment>